<gene>
    <name evidence="3" type="primary">RPS1A</name>
    <name type="ORF">AWRI1631_124710</name>
</gene>
<accession>B5VNY0</accession>
<keyword id="KW-0007">Acetylation</keyword>
<keyword id="KW-0963">Cytoplasm</keyword>
<keyword id="KW-1017">Isopeptide bond</keyword>
<keyword id="KW-0597">Phosphoprotein</keyword>
<keyword id="KW-0687">Ribonucleoprotein</keyword>
<keyword id="KW-0689">Ribosomal protein</keyword>
<keyword id="KW-0832">Ubl conjugation</keyword>
<name>RS3A1_YEAS6</name>
<sequence length="255" mass="28743">MAVGKNKRLSKGKKGQKKRVVDPFTRKEWFDIKAPSTFENRNVGKTLVNKSTGLKSASDALKGRVVEVCLADLQGSEDHSFRKIKLRVDEVQGKNLLTNFHGMDFTTDKLRSMVRKWQTLIEANVTVKTSDDYVLRIFAIAFTRKQANQVKRHSYAQSSHIRAIRKVISEILTKEVQGSTLAQLTSKLIPEVINKEIENATKDIFPLQNIHVRKVKLLKQPKFDVGALMALHGEGSGEEKGKKVTGFKDEVLETV</sequence>
<comment type="subunit">
    <text evidence="3">Component of the small ribosomal subunit. Mature ribosomes consist of a small (40S) and a large (60S) subunit. The 40S subunit contains about 33 different proteins and 1 molecule of RNA (18S). The 60S subunit contains about 49 different proteins and 3 molecules of RNA (25S, 5.8S and 5S).</text>
</comment>
<comment type="subcellular location">
    <subcellularLocation>
        <location evidence="3">Cytoplasm</location>
    </subcellularLocation>
</comment>
<comment type="similarity">
    <text evidence="3">Belongs to the eukaryotic ribosomal protein eS1 family.</text>
</comment>
<proteinExistence type="inferred from homology"/>
<reference key="1">
    <citation type="journal article" date="2008" name="FEMS Yeast Res.">
        <title>Comparative genome analysis of a Saccharomyces cerevisiae wine strain.</title>
        <authorList>
            <person name="Borneman A.R."/>
            <person name="Forgan A.H."/>
            <person name="Pretorius I.S."/>
            <person name="Chambers P.J."/>
        </authorList>
    </citation>
    <scope>NUCLEOTIDE SEQUENCE [LARGE SCALE GENOMIC DNA]</scope>
    <source>
        <strain>AWRI1631</strain>
    </source>
</reference>
<protein>
    <recommendedName>
        <fullName evidence="3">Small ribosomal subunit protein eS1A</fullName>
    </recommendedName>
    <alternativeName>
        <fullName evidence="5">40S ribosomal protein S1-A</fullName>
    </alternativeName>
</protein>
<evidence type="ECO:0000250" key="1">
    <source>
        <dbReference type="UniProtKB" id="P23248"/>
    </source>
</evidence>
<evidence type="ECO:0000250" key="2">
    <source>
        <dbReference type="UniProtKB" id="P33442"/>
    </source>
</evidence>
<evidence type="ECO:0000255" key="3">
    <source>
        <dbReference type="HAMAP-Rule" id="MF_03122"/>
    </source>
</evidence>
<evidence type="ECO:0000256" key="4">
    <source>
        <dbReference type="SAM" id="MobiDB-lite"/>
    </source>
</evidence>
<evidence type="ECO:0000305" key="5"/>
<organism>
    <name type="scientific">Saccharomyces cerevisiae (strain AWRI1631)</name>
    <name type="common">Baker's yeast</name>
    <dbReference type="NCBI Taxonomy" id="545124"/>
    <lineage>
        <taxon>Eukaryota</taxon>
        <taxon>Fungi</taxon>
        <taxon>Dikarya</taxon>
        <taxon>Ascomycota</taxon>
        <taxon>Saccharomycotina</taxon>
        <taxon>Saccharomycetes</taxon>
        <taxon>Saccharomycetales</taxon>
        <taxon>Saccharomycetaceae</taxon>
        <taxon>Saccharomyces</taxon>
    </lineage>
</organism>
<feature type="initiator methionine" description="Removed" evidence="3">
    <location>
        <position position="1"/>
    </location>
</feature>
<feature type="chain" id="PRO_0000389404" description="Small ribosomal subunit protein eS1A">
    <location>
        <begin position="2"/>
        <end position="255"/>
    </location>
</feature>
<feature type="region of interest" description="Disordered" evidence="4">
    <location>
        <begin position="1"/>
        <end position="20"/>
    </location>
</feature>
<feature type="compositionally biased region" description="Basic residues" evidence="4">
    <location>
        <begin position="1"/>
        <end position="18"/>
    </location>
</feature>
<feature type="modified residue" description="N-acetylalanine; partial" evidence="2 3">
    <location>
        <position position="2"/>
    </location>
</feature>
<feature type="modified residue" description="Phosphothreonine" evidence="2">
    <location>
        <position position="245"/>
    </location>
</feature>
<feature type="modified residue" description="Phosphothreonine" evidence="2">
    <location>
        <position position="254"/>
    </location>
</feature>
<feature type="cross-link" description="Glycyl lysine isopeptide (Lys-Gly) (interchain with G-Cter in ubiquitin)" evidence="1">
    <location>
        <position position="248"/>
    </location>
</feature>
<dbReference type="EMBL" id="ABSV01001727">
    <property type="protein sequence ID" value="EDZ70364.1"/>
    <property type="molecule type" value="Genomic_DNA"/>
</dbReference>
<dbReference type="SMR" id="B5VNY0"/>
<dbReference type="Proteomes" id="UP000008988">
    <property type="component" value="Unassembled WGS sequence"/>
</dbReference>
<dbReference type="GO" id="GO:0022627">
    <property type="term" value="C:cytosolic small ribosomal subunit"/>
    <property type="evidence" value="ECO:0007669"/>
    <property type="project" value="UniProtKB-UniRule"/>
</dbReference>
<dbReference type="GO" id="GO:0003735">
    <property type="term" value="F:structural constituent of ribosome"/>
    <property type="evidence" value="ECO:0007669"/>
    <property type="project" value="UniProtKB-UniRule"/>
</dbReference>
<dbReference type="GO" id="GO:0006412">
    <property type="term" value="P:translation"/>
    <property type="evidence" value="ECO:0007669"/>
    <property type="project" value="UniProtKB-UniRule"/>
</dbReference>
<dbReference type="HAMAP" id="MF_03122">
    <property type="entry name" value="Ribosomal_eS1_euk"/>
    <property type="match status" value="1"/>
</dbReference>
<dbReference type="InterPro" id="IPR001593">
    <property type="entry name" value="Ribosomal_eS1"/>
</dbReference>
<dbReference type="InterPro" id="IPR018281">
    <property type="entry name" value="Ribosomal_eS1_CS"/>
</dbReference>
<dbReference type="InterPro" id="IPR027500">
    <property type="entry name" value="Ribosomal_eS1_euk"/>
</dbReference>
<dbReference type="PANTHER" id="PTHR11830">
    <property type="entry name" value="40S RIBOSOMAL PROTEIN S3A"/>
    <property type="match status" value="1"/>
</dbReference>
<dbReference type="Pfam" id="PF01015">
    <property type="entry name" value="Ribosomal_S3Ae"/>
    <property type="match status" value="1"/>
</dbReference>
<dbReference type="SMART" id="SM01397">
    <property type="entry name" value="Ribosomal_S3Ae"/>
    <property type="match status" value="1"/>
</dbReference>
<dbReference type="PROSITE" id="PS01191">
    <property type="entry name" value="RIBOSOMAL_S3AE"/>
    <property type="match status" value="1"/>
</dbReference>